<proteinExistence type="inferred from homology"/>
<dbReference type="EMBL" id="CP000125">
    <property type="protein sequence ID" value="ABA53377.1"/>
    <property type="molecule type" value="Genomic_DNA"/>
</dbReference>
<dbReference type="RefSeq" id="WP_004528812.1">
    <property type="nucleotide sequence ID" value="NC_007435.1"/>
</dbReference>
<dbReference type="BMRB" id="Q3JL30"/>
<dbReference type="SMR" id="Q3JL30"/>
<dbReference type="EnsemblBacteria" id="ABA53377">
    <property type="protein sequence ID" value="ABA53377"/>
    <property type="gene ID" value="BURPS1710b_A0564"/>
</dbReference>
<dbReference type="KEGG" id="bpm:BURPS1710b_A0564"/>
<dbReference type="HOGENOM" id="CLU_1064256_0_0_4"/>
<dbReference type="Proteomes" id="UP000002700">
    <property type="component" value="Chromosome II"/>
</dbReference>
<dbReference type="GO" id="GO:0005576">
    <property type="term" value="C:extracellular region"/>
    <property type="evidence" value="ECO:0007669"/>
    <property type="project" value="UniProtKB-SubCell"/>
</dbReference>
<dbReference type="GO" id="GO:0005096">
    <property type="term" value="F:GTPase activator activity"/>
    <property type="evidence" value="ECO:0007669"/>
    <property type="project" value="UniProtKB-KW"/>
</dbReference>
<dbReference type="GO" id="GO:0005085">
    <property type="term" value="F:guanyl-nucleotide exchange factor activity"/>
    <property type="evidence" value="ECO:0007669"/>
    <property type="project" value="UniProtKB-KW"/>
</dbReference>
<dbReference type="GO" id="GO:0030036">
    <property type="term" value="P:actin cytoskeleton organization"/>
    <property type="evidence" value="ECO:0007669"/>
    <property type="project" value="InterPro"/>
</dbReference>
<dbReference type="Gene3D" id="1.10.4120.10">
    <property type="entry name" value="SopE-like, GEF domain"/>
    <property type="match status" value="1"/>
</dbReference>
<dbReference type="InterPro" id="IPR005414">
    <property type="entry name" value="SopE"/>
</dbReference>
<dbReference type="InterPro" id="IPR035949">
    <property type="entry name" value="SopE-like_GEF_dom_sf"/>
</dbReference>
<dbReference type="InterPro" id="IPR016019">
    <property type="entry name" value="SopE_GEF_dom"/>
</dbReference>
<dbReference type="NCBIfam" id="NF011808">
    <property type="entry name" value="PRK15278.1"/>
    <property type="match status" value="1"/>
</dbReference>
<dbReference type="Pfam" id="PF07487">
    <property type="entry name" value="SopE_GEF"/>
    <property type="match status" value="1"/>
</dbReference>
<dbReference type="PIRSF" id="PIRSF034781">
    <property type="entry name" value="SecIII_sopE"/>
    <property type="match status" value="1"/>
</dbReference>
<dbReference type="PRINTS" id="PR01593">
    <property type="entry name" value="SOPEPROTEIN"/>
</dbReference>
<dbReference type="SUPFAM" id="SSF81832">
    <property type="entry name" value="SopE-like GEF domain"/>
    <property type="match status" value="1"/>
</dbReference>
<comment type="function">
    <text evidence="1">Activator for both CDC42 and RAC1 by directly interacting with these Rho GTPases and acting as a guanine nucleotide exchange factor (GEF). This activation results in actin cytoskeleton rearrangements and stimulates membrane ruffling, thus promoting bacterial entry into non-phagocytic cells (By similarity).</text>
</comment>
<comment type="subunit">
    <text evidence="1">Monomer. Interacts with human CDC42 (By similarity).</text>
</comment>
<comment type="subcellular location">
    <subcellularLocation>
        <location evidence="1">Secreted</location>
    </subcellularLocation>
    <text evidence="1">Secreted via the bsa type III secretion system.</text>
</comment>
<comment type="similarity">
    <text evidence="2">Belongs to the GEF (guanine exchange factor) SopE family.</text>
</comment>
<evidence type="ECO:0000250" key="1"/>
<evidence type="ECO:0000305" key="2"/>
<name>BOPE_BURP1</name>
<keyword id="KW-0343">GTPase activation</keyword>
<keyword id="KW-0344">Guanine-nucleotide releasing factor</keyword>
<keyword id="KW-0964">Secreted</keyword>
<keyword id="KW-0843">Virulence</keyword>
<accession>Q3JL30</accession>
<gene>
    <name type="primary">bopE</name>
    <name type="ordered locus">BURPS1710b_A0564</name>
</gene>
<protein>
    <recommendedName>
        <fullName>Guanine nucleotide exchange factor BopE</fullName>
    </recommendedName>
    <alternativeName>
        <fullName>Effector protein BopE</fullName>
    </alternativeName>
</protein>
<organism>
    <name type="scientific">Burkholderia pseudomallei (strain 1710b)</name>
    <dbReference type="NCBI Taxonomy" id="320372"/>
    <lineage>
        <taxon>Bacteria</taxon>
        <taxon>Pseudomonadati</taxon>
        <taxon>Pseudomonadota</taxon>
        <taxon>Betaproteobacteria</taxon>
        <taxon>Burkholderiales</taxon>
        <taxon>Burkholderiaceae</taxon>
        <taxon>Burkholderia</taxon>
        <taxon>pseudomallei group</taxon>
    </lineage>
</organism>
<reference key="1">
    <citation type="journal article" date="2010" name="Genome Biol. Evol.">
        <title>Continuing evolution of Burkholderia mallei through genome reduction and large-scale rearrangements.</title>
        <authorList>
            <person name="Losada L."/>
            <person name="Ronning C.M."/>
            <person name="DeShazer D."/>
            <person name="Woods D."/>
            <person name="Fedorova N."/>
            <person name="Kim H.S."/>
            <person name="Shabalina S.A."/>
            <person name="Pearson T.R."/>
            <person name="Brinkac L."/>
            <person name="Tan P."/>
            <person name="Nandi T."/>
            <person name="Crabtree J."/>
            <person name="Badger J."/>
            <person name="Beckstrom-Sternberg S."/>
            <person name="Saqib M."/>
            <person name="Schutzer S.E."/>
            <person name="Keim P."/>
            <person name="Nierman W.C."/>
        </authorList>
    </citation>
    <scope>NUCLEOTIDE SEQUENCE [LARGE SCALE GENOMIC DNA]</scope>
    <source>
        <strain>1710b</strain>
    </source>
</reference>
<feature type="chain" id="PRO_0000344032" description="Guanine nucleotide exchange factor BopE">
    <location>
        <begin position="1"/>
        <end position="261"/>
    </location>
</feature>
<sequence length="261" mass="28705">MTYNPRIGGFTHVKQASFDVHVKRGEAQPRTSFAQQIKRIFSKIGETLGQLFRHRAPDSAPGRVRLQGVRYVGSYRPTGDAKQAIRHFVDEAVKQVAHARTPEIRQDAEFGRQVYEATLCAIFSEAKDRFCMDPATRAGNVRPAFIEALGDAARATGLPGADKQGVFTPSGAGTNPLYTEIRLRADTLMGAELAARPEYRELQPYARQQAIDLVANALPAERSNTLVEFRQTVQTLEATYRRAAQDASRDEKGATNAADGA</sequence>